<organism>
    <name type="scientific">Corynebacterium efficiens (strain DSM 44549 / YS-314 / AJ 12310 / JCM 11189 / NBRC 100395)</name>
    <dbReference type="NCBI Taxonomy" id="196164"/>
    <lineage>
        <taxon>Bacteria</taxon>
        <taxon>Bacillati</taxon>
        <taxon>Actinomycetota</taxon>
        <taxon>Actinomycetes</taxon>
        <taxon>Mycobacteriales</taxon>
        <taxon>Corynebacteriaceae</taxon>
        <taxon>Corynebacterium</taxon>
    </lineage>
</organism>
<dbReference type="EC" id="2.5.1.3" evidence="1"/>
<dbReference type="EMBL" id="BA000035">
    <property type="protein sequence ID" value="BAC18743.1"/>
    <property type="molecule type" value="Genomic_DNA"/>
</dbReference>
<dbReference type="RefSeq" id="WP_006767932.1">
    <property type="nucleotide sequence ID" value="NC_004369.1"/>
</dbReference>
<dbReference type="SMR" id="Q8FP55"/>
<dbReference type="STRING" id="196164.gene:10742361"/>
<dbReference type="KEGG" id="cef:CE1933"/>
<dbReference type="eggNOG" id="COG0352">
    <property type="taxonomic scope" value="Bacteria"/>
</dbReference>
<dbReference type="HOGENOM" id="CLU_018272_3_2_11"/>
<dbReference type="OrthoDB" id="3243336at2"/>
<dbReference type="UniPathway" id="UPA00060">
    <property type="reaction ID" value="UER00141"/>
</dbReference>
<dbReference type="Proteomes" id="UP000001409">
    <property type="component" value="Chromosome"/>
</dbReference>
<dbReference type="GO" id="GO:0005737">
    <property type="term" value="C:cytoplasm"/>
    <property type="evidence" value="ECO:0007669"/>
    <property type="project" value="TreeGrafter"/>
</dbReference>
<dbReference type="GO" id="GO:0000287">
    <property type="term" value="F:magnesium ion binding"/>
    <property type="evidence" value="ECO:0007669"/>
    <property type="project" value="UniProtKB-UniRule"/>
</dbReference>
<dbReference type="GO" id="GO:0004789">
    <property type="term" value="F:thiamine-phosphate diphosphorylase activity"/>
    <property type="evidence" value="ECO:0007669"/>
    <property type="project" value="UniProtKB-UniRule"/>
</dbReference>
<dbReference type="GO" id="GO:0009228">
    <property type="term" value="P:thiamine biosynthetic process"/>
    <property type="evidence" value="ECO:0007669"/>
    <property type="project" value="UniProtKB-KW"/>
</dbReference>
<dbReference type="GO" id="GO:0009229">
    <property type="term" value="P:thiamine diphosphate biosynthetic process"/>
    <property type="evidence" value="ECO:0007669"/>
    <property type="project" value="UniProtKB-UniRule"/>
</dbReference>
<dbReference type="CDD" id="cd00564">
    <property type="entry name" value="TMP_TenI"/>
    <property type="match status" value="1"/>
</dbReference>
<dbReference type="Gene3D" id="3.20.20.70">
    <property type="entry name" value="Aldolase class I"/>
    <property type="match status" value="1"/>
</dbReference>
<dbReference type="HAMAP" id="MF_00097">
    <property type="entry name" value="TMP_synthase"/>
    <property type="match status" value="1"/>
</dbReference>
<dbReference type="InterPro" id="IPR013785">
    <property type="entry name" value="Aldolase_TIM"/>
</dbReference>
<dbReference type="InterPro" id="IPR036206">
    <property type="entry name" value="ThiamineP_synth_sf"/>
</dbReference>
<dbReference type="InterPro" id="IPR022998">
    <property type="entry name" value="ThiamineP_synth_TenI"/>
</dbReference>
<dbReference type="InterPro" id="IPR034291">
    <property type="entry name" value="TMP_synthase"/>
</dbReference>
<dbReference type="NCBIfam" id="NF000740">
    <property type="entry name" value="PRK00043.3-4"/>
    <property type="match status" value="1"/>
</dbReference>
<dbReference type="NCBIfam" id="TIGR00693">
    <property type="entry name" value="thiE"/>
    <property type="match status" value="1"/>
</dbReference>
<dbReference type="PANTHER" id="PTHR20857">
    <property type="entry name" value="THIAMINE-PHOSPHATE PYROPHOSPHORYLASE"/>
    <property type="match status" value="1"/>
</dbReference>
<dbReference type="PANTHER" id="PTHR20857:SF15">
    <property type="entry name" value="THIAMINE-PHOSPHATE SYNTHASE"/>
    <property type="match status" value="1"/>
</dbReference>
<dbReference type="Pfam" id="PF02581">
    <property type="entry name" value="TMP-TENI"/>
    <property type="match status" value="1"/>
</dbReference>
<dbReference type="SUPFAM" id="SSF51391">
    <property type="entry name" value="Thiamin phosphate synthase"/>
    <property type="match status" value="1"/>
</dbReference>
<feature type="chain" id="PRO_0000157008" description="Thiamine-phosphate synthase">
    <location>
        <begin position="1"/>
        <end position="216"/>
    </location>
</feature>
<feature type="binding site" evidence="1">
    <location>
        <begin position="37"/>
        <end position="41"/>
    </location>
    <ligand>
        <name>4-amino-2-methyl-5-(diphosphooxymethyl)pyrimidine</name>
        <dbReference type="ChEBI" id="CHEBI:57841"/>
    </ligand>
</feature>
<feature type="binding site" evidence="1">
    <location>
        <position position="68"/>
    </location>
    <ligand>
        <name>4-amino-2-methyl-5-(diphosphooxymethyl)pyrimidine</name>
        <dbReference type="ChEBI" id="CHEBI:57841"/>
    </ligand>
</feature>
<feature type="binding site" evidence="1">
    <location>
        <position position="69"/>
    </location>
    <ligand>
        <name>Mg(2+)</name>
        <dbReference type="ChEBI" id="CHEBI:18420"/>
    </ligand>
</feature>
<feature type="binding site" evidence="1">
    <location>
        <position position="93"/>
    </location>
    <ligand>
        <name>Mg(2+)</name>
        <dbReference type="ChEBI" id="CHEBI:18420"/>
    </ligand>
</feature>
<feature type="binding site" evidence="1">
    <location>
        <position position="112"/>
    </location>
    <ligand>
        <name>4-amino-2-methyl-5-(diphosphooxymethyl)pyrimidine</name>
        <dbReference type="ChEBI" id="CHEBI:57841"/>
    </ligand>
</feature>
<feature type="binding site" evidence="1">
    <location>
        <begin position="140"/>
        <end position="142"/>
    </location>
    <ligand>
        <name>2-[(2R,5Z)-2-carboxy-4-methylthiazol-5(2H)-ylidene]ethyl phosphate</name>
        <dbReference type="ChEBI" id="CHEBI:62899"/>
    </ligand>
</feature>
<feature type="binding site" evidence="1">
    <location>
        <position position="143"/>
    </location>
    <ligand>
        <name>4-amino-2-methyl-5-(diphosphooxymethyl)pyrimidine</name>
        <dbReference type="ChEBI" id="CHEBI:57841"/>
    </ligand>
</feature>
<keyword id="KW-0460">Magnesium</keyword>
<keyword id="KW-0479">Metal-binding</keyword>
<keyword id="KW-1185">Reference proteome</keyword>
<keyword id="KW-0784">Thiamine biosynthesis</keyword>
<keyword id="KW-0808">Transferase</keyword>
<name>THIE_COREF</name>
<sequence length="216" mass="22925">MRPTPDLRCYFITGHGSHEHIVDVARRAVAGGARTVQVRSKPITARELYALTEAVALAVGETAHVLVDDRVDIALALRHRGLPVHGVHVGQDDLPVRDVRALLGEEAIIGLTTGTRELVEAANEHAEVLDYIGAGPFRPTPTKDSGRPPLGVEGYRELVELSRLPVVAIGDVTADDAPALADTGVAGLAVVRGLMESADPTGYARRLITGFGEGRQ</sequence>
<evidence type="ECO:0000255" key="1">
    <source>
        <dbReference type="HAMAP-Rule" id="MF_00097"/>
    </source>
</evidence>
<accession>Q8FP55</accession>
<reference key="1">
    <citation type="journal article" date="2003" name="Genome Res.">
        <title>Comparative complete genome sequence analysis of the amino acid replacements responsible for the thermostability of Corynebacterium efficiens.</title>
        <authorList>
            <person name="Nishio Y."/>
            <person name="Nakamura Y."/>
            <person name="Kawarabayasi Y."/>
            <person name="Usuda Y."/>
            <person name="Kimura E."/>
            <person name="Sugimoto S."/>
            <person name="Matsui K."/>
            <person name="Yamagishi A."/>
            <person name="Kikuchi H."/>
            <person name="Ikeo K."/>
            <person name="Gojobori T."/>
        </authorList>
    </citation>
    <scope>NUCLEOTIDE SEQUENCE [LARGE SCALE GENOMIC DNA]</scope>
    <source>
        <strain>DSM 44549 / YS-314 / AJ 12310 / JCM 11189 / NBRC 100395</strain>
    </source>
</reference>
<comment type="function">
    <text evidence="1">Condenses 4-methyl-5-(beta-hydroxyethyl)thiazole monophosphate (THZ-P) and 2-methyl-4-amino-5-hydroxymethyl pyrimidine pyrophosphate (HMP-PP) to form thiamine monophosphate (TMP).</text>
</comment>
<comment type="catalytic activity">
    <reaction evidence="1">
        <text>2-[(2R,5Z)-2-carboxy-4-methylthiazol-5(2H)-ylidene]ethyl phosphate + 4-amino-2-methyl-5-(diphosphooxymethyl)pyrimidine + 2 H(+) = thiamine phosphate + CO2 + diphosphate</text>
        <dbReference type="Rhea" id="RHEA:47844"/>
        <dbReference type="ChEBI" id="CHEBI:15378"/>
        <dbReference type="ChEBI" id="CHEBI:16526"/>
        <dbReference type="ChEBI" id="CHEBI:33019"/>
        <dbReference type="ChEBI" id="CHEBI:37575"/>
        <dbReference type="ChEBI" id="CHEBI:57841"/>
        <dbReference type="ChEBI" id="CHEBI:62899"/>
        <dbReference type="EC" id="2.5.1.3"/>
    </reaction>
</comment>
<comment type="catalytic activity">
    <reaction evidence="1">
        <text>2-(2-carboxy-4-methylthiazol-5-yl)ethyl phosphate + 4-amino-2-methyl-5-(diphosphooxymethyl)pyrimidine + 2 H(+) = thiamine phosphate + CO2 + diphosphate</text>
        <dbReference type="Rhea" id="RHEA:47848"/>
        <dbReference type="ChEBI" id="CHEBI:15378"/>
        <dbReference type="ChEBI" id="CHEBI:16526"/>
        <dbReference type="ChEBI" id="CHEBI:33019"/>
        <dbReference type="ChEBI" id="CHEBI:37575"/>
        <dbReference type="ChEBI" id="CHEBI:57841"/>
        <dbReference type="ChEBI" id="CHEBI:62890"/>
        <dbReference type="EC" id="2.5.1.3"/>
    </reaction>
</comment>
<comment type="catalytic activity">
    <reaction evidence="1">
        <text>4-methyl-5-(2-phosphooxyethyl)-thiazole + 4-amino-2-methyl-5-(diphosphooxymethyl)pyrimidine + H(+) = thiamine phosphate + diphosphate</text>
        <dbReference type="Rhea" id="RHEA:22328"/>
        <dbReference type="ChEBI" id="CHEBI:15378"/>
        <dbReference type="ChEBI" id="CHEBI:33019"/>
        <dbReference type="ChEBI" id="CHEBI:37575"/>
        <dbReference type="ChEBI" id="CHEBI:57841"/>
        <dbReference type="ChEBI" id="CHEBI:58296"/>
        <dbReference type="EC" id="2.5.1.3"/>
    </reaction>
</comment>
<comment type="cofactor">
    <cofactor evidence="1">
        <name>Mg(2+)</name>
        <dbReference type="ChEBI" id="CHEBI:18420"/>
    </cofactor>
    <text evidence="1">Binds 1 Mg(2+) ion per subunit.</text>
</comment>
<comment type="pathway">
    <text evidence="1">Cofactor biosynthesis; thiamine diphosphate biosynthesis; thiamine phosphate from 4-amino-2-methyl-5-diphosphomethylpyrimidine and 4-methyl-5-(2-phosphoethyl)-thiazole: step 1/1.</text>
</comment>
<comment type="miscellaneous">
    <text>There is also a thiED fusion protein in this bacteria (AC Q8FTH8).</text>
</comment>
<comment type="similarity">
    <text evidence="1">Belongs to the thiamine-phosphate synthase family.</text>
</comment>
<protein>
    <recommendedName>
        <fullName evidence="1">Thiamine-phosphate synthase</fullName>
        <shortName evidence="1">TP synthase</shortName>
        <shortName evidence="1">TPS</shortName>
        <ecNumber evidence="1">2.5.1.3</ecNumber>
    </recommendedName>
    <alternativeName>
        <fullName evidence="1">Thiamine-phosphate pyrophosphorylase</fullName>
        <shortName evidence="1">TMP pyrophosphorylase</shortName>
        <shortName evidence="1">TMP-PPase</shortName>
    </alternativeName>
</protein>
<gene>
    <name evidence="1" type="primary">thiE</name>
    <name type="ordered locus">CE1933</name>
</gene>
<proteinExistence type="inferred from homology"/>